<accession>P31924</accession>
<accession>A0A0P0VZ94</accession>
<accession>F4MFT0</accession>
<accession>Q10K07</accession>
<accession>Q10K08</accession>
<accession>Q7G7N0</accession>
<feature type="chain" id="PRO_0000204656" description="Sucrose synthase 1">
    <location>
        <begin position="1"/>
        <end position="816"/>
    </location>
</feature>
<feature type="region of interest" description="GT-B glycosyltransferase" evidence="2">
    <location>
        <begin position="280"/>
        <end position="757"/>
    </location>
</feature>
<protein>
    <recommendedName>
        <fullName>Sucrose synthase 1</fullName>
        <shortName>OsSUS1</shortName>
        <ecNumber>2.4.1.13</ecNumber>
    </recommendedName>
    <alternativeName>
        <fullName>Sucrose synthase 2</fullName>
        <shortName>RSs2</shortName>
    </alternativeName>
    <alternativeName>
        <fullName>Sucrose-UDP glucosyltransferase 1</fullName>
    </alternativeName>
</protein>
<keyword id="KW-0328">Glycosyltransferase</keyword>
<keyword id="KW-1185">Reference proteome</keyword>
<keyword id="KW-0808">Transferase</keyword>
<name>SUS1_ORYSJ</name>
<reference key="1">
    <citation type="journal article" date="1992" name="Plant Mol. Biol.">
        <title>Isolation and sequences of rice sucrose synthase cDNA and genomic DNA.</title>
        <authorList>
            <person name="Yu W.P."/>
            <person name="Wang A.Y."/>
            <person name="Juang R.H."/>
            <person name="Sung H.Y."/>
            <person name="Su J.C."/>
        </authorList>
    </citation>
    <scope>NUCLEOTIDE SEQUENCE [GENOMIC DNA]</scope>
    <source>
        <strain>cv. Tainung 67</strain>
        <tissue>Seed</tissue>
    </source>
</reference>
<reference key="2">
    <citation type="journal article" date="1996" name="Biosci. Biotechnol. Biochem.">
        <title>Complete structures of three rice sucrose synthase isogenes and differential regulation of their expressions.</title>
        <authorList>
            <person name="Huang J.W."/>
            <person name="Chen J.T."/>
            <person name="Yu W.P."/>
            <person name="Shyur L.F."/>
            <person name="Wang A.Y."/>
            <person name="Sung H.Y."/>
            <person name="Lee P.D."/>
            <person name="Su J.C."/>
        </authorList>
    </citation>
    <scope>NUCLEOTIDE SEQUENCE [GENOMIC DNA]</scope>
    <source>
        <strain>cv. Tainung 67</strain>
        <tissue>Seed</tissue>
    </source>
</reference>
<reference key="3">
    <citation type="journal article" date="2011" name="Mol. Cells">
        <title>Identification and characterization of the duplicate rice sucrose synthase genes OsSUS5 and OsSUS7 which are associated with the plasma membrane.</title>
        <authorList>
            <person name="Cho J.I."/>
            <person name="Kim H.B."/>
            <person name="Kim C.Y."/>
            <person name="Hahn T.R."/>
            <person name="Jeon J.S."/>
        </authorList>
    </citation>
    <scope>NUCLEOTIDE SEQUENCE [MRNA]</scope>
    <scope>GENE FAMILY</scope>
    <scope>DEVELOPMENTAL STAGE</scope>
    <source>
        <strain>cv. Nipponbare</strain>
    </source>
</reference>
<reference key="4">
    <citation type="journal article" date="2005" name="Genome Res.">
        <title>Sequence, annotation, and analysis of synteny between rice chromosome 3 and diverged grass species.</title>
        <authorList>
            <consortium name="The rice chromosome 3 sequencing consortium"/>
            <person name="Buell C.R."/>
            <person name="Yuan Q."/>
            <person name="Ouyang S."/>
            <person name="Liu J."/>
            <person name="Zhu W."/>
            <person name="Wang A."/>
            <person name="Maiti R."/>
            <person name="Haas B."/>
            <person name="Wortman J."/>
            <person name="Pertea M."/>
            <person name="Jones K.M."/>
            <person name="Kim M."/>
            <person name="Overton L."/>
            <person name="Tsitrin T."/>
            <person name="Fadrosh D."/>
            <person name="Bera J."/>
            <person name="Weaver B."/>
            <person name="Jin S."/>
            <person name="Johri S."/>
            <person name="Reardon M."/>
            <person name="Webb K."/>
            <person name="Hill J."/>
            <person name="Moffat K."/>
            <person name="Tallon L."/>
            <person name="Van Aken S."/>
            <person name="Lewis M."/>
            <person name="Utterback T."/>
            <person name="Feldblyum T."/>
            <person name="Zismann V."/>
            <person name="Iobst S."/>
            <person name="Hsiao J."/>
            <person name="de Vazeille A.R."/>
            <person name="Salzberg S.L."/>
            <person name="White O."/>
            <person name="Fraser C.M."/>
            <person name="Yu Y."/>
            <person name="Kim H."/>
            <person name="Rambo T."/>
            <person name="Currie J."/>
            <person name="Collura K."/>
            <person name="Kernodle-Thompson S."/>
            <person name="Wei F."/>
            <person name="Kudrna K."/>
            <person name="Ammiraju J.S.S."/>
            <person name="Luo M."/>
            <person name="Goicoechea J.L."/>
            <person name="Wing R.A."/>
            <person name="Henry D."/>
            <person name="Oates R."/>
            <person name="Palmer M."/>
            <person name="Pries G."/>
            <person name="Saski C."/>
            <person name="Simmons J."/>
            <person name="Soderlund C."/>
            <person name="Nelson W."/>
            <person name="de la Bastide M."/>
            <person name="Spiegel L."/>
            <person name="Nascimento L."/>
            <person name="Huang E."/>
            <person name="Preston R."/>
            <person name="Zutavern T."/>
            <person name="Palmer L."/>
            <person name="O'Shaughnessy A."/>
            <person name="Dike S."/>
            <person name="McCombie W.R."/>
            <person name="Minx P."/>
            <person name="Cordum H."/>
            <person name="Wilson R."/>
            <person name="Jin W."/>
            <person name="Lee H.R."/>
            <person name="Jiang J."/>
            <person name="Jackson S."/>
        </authorList>
    </citation>
    <scope>NUCLEOTIDE SEQUENCE [LARGE SCALE GENOMIC DNA]</scope>
    <source>
        <strain>cv. Nipponbare</strain>
    </source>
</reference>
<reference key="5">
    <citation type="journal article" date="2005" name="Nature">
        <title>The map-based sequence of the rice genome.</title>
        <authorList>
            <consortium name="International rice genome sequencing project (IRGSP)"/>
        </authorList>
    </citation>
    <scope>NUCLEOTIDE SEQUENCE [LARGE SCALE GENOMIC DNA]</scope>
    <source>
        <strain>cv. Nipponbare</strain>
    </source>
</reference>
<reference key="6">
    <citation type="journal article" date="2008" name="Nucleic Acids Res.">
        <title>The rice annotation project database (RAP-DB): 2008 update.</title>
        <authorList>
            <consortium name="The rice annotation project (RAP)"/>
        </authorList>
    </citation>
    <scope>GENOME REANNOTATION</scope>
    <source>
        <strain>cv. Nipponbare</strain>
    </source>
</reference>
<reference key="7">
    <citation type="journal article" date="2013" name="Rice">
        <title>Improvement of the Oryza sativa Nipponbare reference genome using next generation sequence and optical map data.</title>
        <authorList>
            <person name="Kawahara Y."/>
            <person name="de la Bastide M."/>
            <person name="Hamilton J.P."/>
            <person name="Kanamori H."/>
            <person name="McCombie W.R."/>
            <person name="Ouyang S."/>
            <person name="Schwartz D.C."/>
            <person name="Tanaka T."/>
            <person name="Wu J."/>
            <person name="Zhou S."/>
            <person name="Childs K.L."/>
            <person name="Davidson R.M."/>
            <person name="Lin H."/>
            <person name="Quesada-Ocampo L."/>
            <person name="Vaillancourt B."/>
            <person name="Sakai H."/>
            <person name="Lee S.S."/>
            <person name="Kim J."/>
            <person name="Numa H."/>
            <person name="Itoh T."/>
            <person name="Buell C.R."/>
            <person name="Matsumoto T."/>
        </authorList>
    </citation>
    <scope>GENOME REANNOTATION</scope>
    <source>
        <strain>cv. Nipponbare</strain>
    </source>
</reference>
<reference key="8">
    <citation type="journal article" date="2005" name="PLoS Biol.">
        <title>The genomes of Oryza sativa: a history of duplications.</title>
        <authorList>
            <person name="Yu J."/>
            <person name="Wang J."/>
            <person name="Lin W."/>
            <person name="Li S."/>
            <person name="Li H."/>
            <person name="Zhou J."/>
            <person name="Ni P."/>
            <person name="Dong W."/>
            <person name="Hu S."/>
            <person name="Zeng C."/>
            <person name="Zhang J."/>
            <person name="Zhang Y."/>
            <person name="Li R."/>
            <person name="Xu Z."/>
            <person name="Li S."/>
            <person name="Li X."/>
            <person name="Zheng H."/>
            <person name="Cong L."/>
            <person name="Lin L."/>
            <person name="Yin J."/>
            <person name="Geng J."/>
            <person name="Li G."/>
            <person name="Shi J."/>
            <person name="Liu J."/>
            <person name="Lv H."/>
            <person name="Li J."/>
            <person name="Wang J."/>
            <person name="Deng Y."/>
            <person name="Ran L."/>
            <person name="Shi X."/>
            <person name="Wang X."/>
            <person name="Wu Q."/>
            <person name="Li C."/>
            <person name="Ren X."/>
            <person name="Wang J."/>
            <person name="Wang X."/>
            <person name="Li D."/>
            <person name="Liu D."/>
            <person name="Zhang X."/>
            <person name="Ji Z."/>
            <person name="Zhao W."/>
            <person name="Sun Y."/>
            <person name="Zhang Z."/>
            <person name="Bao J."/>
            <person name="Han Y."/>
            <person name="Dong L."/>
            <person name="Ji J."/>
            <person name="Chen P."/>
            <person name="Wu S."/>
            <person name="Liu J."/>
            <person name="Xiao Y."/>
            <person name="Bu D."/>
            <person name="Tan J."/>
            <person name="Yang L."/>
            <person name="Ye C."/>
            <person name="Zhang J."/>
            <person name="Xu J."/>
            <person name="Zhou Y."/>
            <person name="Yu Y."/>
            <person name="Zhang B."/>
            <person name="Zhuang S."/>
            <person name="Wei H."/>
            <person name="Liu B."/>
            <person name="Lei M."/>
            <person name="Yu H."/>
            <person name="Li Y."/>
            <person name="Xu H."/>
            <person name="Wei S."/>
            <person name="He X."/>
            <person name="Fang L."/>
            <person name="Zhang Z."/>
            <person name="Zhang Y."/>
            <person name="Huang X."/>
            <person name="Su Z."/>
            <person name="Tong W."/>
            <person name="Li J."/>
            <person name="Tong Z."/>
            <person name="Li S."/>
            <person name="Ye J."/>
            <person name="Wang L."/>
            <person name="Fang L."/>
            <person name="Lei T."/>
            <person name="Chen C.-S."/>
            <person name="Chen H.-C."/>
            <person name="Xu Z."/>
            <person name="Li H."/>
            <person name="Huang H."/>
            <person name="Zhang F."/>
            <person name="Xu H."/>
            <person name="Li N."/>
            <person name="Zhao C."/>
            <person name="Li S."/>
            <person name="Dong L."/>
            <person name="Huang Y."/>
            <person name="Li L."/>
            <person name="Xi Y."/>
            <person name="Qi Q."/>
            <person name="Li W."/>
            <person name="Zhang B."/>
            <person name="Hu W."/>
            <person name="Zhang Y."/>
            <person name="Tian X."/>
            <person name="Jiao Y."/>
            <person name="Liang X."/>
            <person name="Jin J."/>
            <person name="Gao L."/>
            <person name="Zheng W."/>
            <person name="Hao B."/>
            <person name="Liu S.-M."/>
            <person name="Wang W."/>
            <person name="Yuan L."/>
            <person name="Cao M."/>
            <person name="McDermott J."/>
            <person name="Samudrala R."/>
            <person name="Wang J."/>
            <person name="Wong G.K.-S."/>
            <person name="Yang H."/>
        </authorList>
    </citation>
    <scope>NUCLEOTIDE SEQUENCE [LARGE SCALE GENOMIC DNA]</scope>
    <source>
        <strain>cv. Nipponbare</strain>
    </source>
</reference>
<reference key="9">
    <citation type="journal article" date="2003" name="Science">
        <title>Collection, mapping, and annotation of over 28,000 cDNA clones from japonica rice.</title>
        <authorList>
            <consortium name="The rice full-length cDNA consortium"/>
        </authorList>
    </citation>
    <scope>NUCLEOTIDE SEQUENCE [LARGE SCALE MRNA]</scope>
    <source>
        <strain>cv. Nipponbare</strain>
    </source>
</reference>
<reference key="10">
    <citation type="journal article" date="1998" name="Biochem. Mol. Biol. Int.">
        <title>Purification and characterization of sucrose synthase isozymes from etiolated rice seedlings.</title>
        <authorList>
            <person name="Huang D.Y."/>
            <person name="Wang A.-Y."/>
        </authorList>
    </citation>
    <scope>SUBUNIT</scope>
</reference>
<reference key="11">
    <citation type="journal article" date="1999" name="Plant Cell Physiol.">
        <title>Differentially and developmentally regulated expression of three rice sucrose synthase genes.</title>
        <authorList>
            <person name="Wang A.-Y."/>
            <person name="Kao M.-H."/>
            <person name="Yang W.-H."/>
            <person name="Sayion Y."/>
            <person name="Liu L.-F."/>
            <person name="Lee P.-D."/>
            <person name="Su J.-C."/>
        </authorList>
    </citation>
    <scope>TISSUE SPECIFICITY</scope>
    <scope>DEVELOPMENTAL STAGE</scope>
</reference>
<reference key="12">
    <citation type="journal article" date="2003" name="Physiol. Plantarum">
        <title>Sugar-modulated gene expression of sucrose synthase in suspension-cultured cells of rice.</title>
        <authorList>
            <person name="Liao Y.-C."/>
            <person name="Wang A.-Y."/>
        </authorList>
    </citation>
    <scope>INDUCTION BY SUGARS</scope>
</reference>
<reference key="13">
    <citation type="journal article" date="2005" name="Plant Cell Physiol.">
        <title>Expression patterns of genes encoding carbohydrate-metabolizing enzymes and their relationship to grain filling in rice (Oryza sativa L.): comparison of caryopses located at different positions in a panicle.</title>
        <authorList>
            <person name="Ishimaru T."/>
            <person name="Hirose T."/>
            <person name="Matsuda T."/>
            <person name="Goto A."/>
            <person name="Takahashi K."/>
            <person name="Sasaki H."/>
            <person name="Terao T."/>
            <person name="Ishii R."/>
            <person name="Ohsugi R."/>
            <person name="Yamagishi T."/>
        </authorList>
    </citation>
    <scope>DEVELOPMENTAL STAGE</scope>
</reference>
<reference key="14">
    <citation type="journal article" date="2008" name="J. Integr. Plant Biol.">
        <title>Effects of elevated CO2 on growth, carbon assimilation, photosynthate accumulation and related enzymes in rice leaves during sink-source transition.</title>
        <authorList>
            <person name="Li J.-Y."/>
            <person name="Liu X.-H."/>
            <person name="Cai Q.-S."/>
            <person name="Gu H."/>
            <person name="Zhang S.-S."/>
            <person name="Wu Y.-Y."/>
            <person name="Wang C.-J."/>
        </authorList>
    </citation>
    <scope>INDUCTION BY CO2</scope>
</reference>
<reference key="15">
    <citation type="journal article" date="2008" name="Plant Sci.">
        <title>An expression analysis profile for the entire sucrose synthase gene family in rice.</title>
        <authorList>
            <person name="Hirose T."/>
            <person name="Scofield G.N."/>
            <person name="Terao T."/>
        </authorList>
    </citation>
    <scope>GENE FAMILY</scope>
    <scope>TISSUE SPECIFICITY</scope>
</reference>
<evidence type="ECO:0000250" key="1"/>
<evidence type="ECO:0000250" key="2">
    <source>
        <dbReference type="UniProtKB" id="P49040"/>
    </source>
</evidence>
<evidence type="ECO:0000269" key="3">
    <source>
    </source>
</evidence>
<evidence type="ECO:0000269" key="4">
    <source>
    </source>
</evidence>
<evidence type="ECO:0000269" key="5">
    <source>
    </source>
</evidence>
<evidence type="ECO:0000269" key="6">
    <source>
    </source>
</evidence>
<evidence type="ECO:0000269" key="7">
    <source>
    </source>
</evidence>
<evidence type="ECO:0000269" key="8">
    <source ref="12"/>
</evidence>
<evidence type="ECO:0000269" key="9">
    <source ref="15"/>
</evidence>
<evidence type="ECO:0000305" key="10"/>
<sequence>MGEAAGDRVLSRLHSVRERIGDSLSAHPNELVAVFTRLVNLGKGMLQAHQIIAEYNNAISEADREKLKDGAFEDVLRSAQEGIVISPWVALAIRPRPGVWEYVRVNVSELAVELLTVPEYLQFKEQLVEEGTNNNFVLELDFEPFNASFPRPSLSKSIGNGVQFLNRHLSSKLFHDKESMYPLLNFLRAHNYKGMTMMLNDRIRSLSALQGALRKAEEHLSGLSADTPYSEFHHRFQELGLEKGWGDCAKRSQETIHLLLDLLEAPDPSTLEKFLGTIPMVFNVVIMSPHGYFAQANVLGYPDTGGQVVYILDQVRAMENEMLLRIKQQGLNITPRILIVTRLLPDATGTTCGQRLEKVLGTEHTHILRVPFRTENGIVRKWISRFEVWPYLETFTDDVAHEIAGELQANPDLIIGNYSDGNLVACLLAHKMGVTHCTIAHALEKTKYPNSDLYWKKFEDHYHFSCQFTTDLIAMNHADFIITSTFQEIAGNKDTVGQYESHMAFTMPGLYRVVHGIDVFDPKFNIVSPGADMSIYFPYSESRKRLTSLHPEIEELLYSEVDNNEHKFMLKDRNKPIIFSMARLDRVKNLTGLVELYGRNPRLQELVNLVVVCGDHGNPSKDKEEQAEFKKMFDLIEQYNLNGHIRWISAQMNRVRNGELYRYICDTKGAFVQPAFYEAFGLTVVESMTCGLPTFATAYGGPAEIIVNGVSGFHIDPYQGDKASALLVEFFEKCQEDPSHWTKISQGGLQRIEEKYTWKLYSERLMTLTGVYGFWKYVSNLERRETRRYLEMLYALKYRTMASTVPLAVEGEPSNK</sequence>
<dbReference type="EC" id="2.4.1.13"/>
<dbReference type="EMBL" id="X59046">
    <property type="protein sequence ID" value="CAA41774.1"/>
    <property type="molecule type" value="Genomic_DNA"/>
</dbReference>
<dbReference type="EMBL" id="HQ895719">
    <property type="protein sequence ID" value="AEX32874.1"/>
    <property type="molecule type" value="mRNA"/>
</dbReference>
<dbReference type="EMBL" id="AC084380">
    <property type="protein sequence ID" value="AAK52129.1"/>
    <property type="molecule type" value="Genomic_DNA"/>
</dbReference>
<dbReference type="EMBL" id="DP000009">
    <property type="protein sequence ID" value="ABF96467.1"/>
    <property type="molecule type" value="Genomic_DNA"/>
</dbReference>
<dbReference type="EMBL" id="DP000009">
    <property type="protein sequence ID" value="ABF96468.1"/>
    <property type="molecule type" value="Genomic_DNA"/>
</dbReference>
<dbReference type="EMBL" id="DP000009">
    <property type="protein sequence ID" value="ABF96469.1"/>
    <property type="status" value="ALT_SEQ"/>
    <property type="molecule type" value="Genomic_DNA"/>
</dbReference>
<dbReference type="EMBL" id="AP008209">
    <property type="protein sequence ID" value="BAF12233.1"/>
    <property type="molecule type" value="Genomic_DNA"/>
</dbReference>
<dbReference type="EMBL" id="AP014959">
    <property type="protein sequence ID" value="BAS84604.1"/>
    <property type="molecule type" value="Genomic_DNA"/>
</dbReference>
<dbReference type="EMBL" id="CM000140">
    <property type="protein sequence ID" value="EAZ27243.1"/>
    <property type="molecule type" value="Genomic_DNA"/>
</dbReference>
<dbReference type="EMBL" id="AK100334">
    <property type="protein sequence ID" value="BAG94557.1"/>
    <property type="molecule type" value="mRNA"/>
</dbReference>
<dbReference type="PIR" id="S19139">
    <property type="entry name" value="S19139"/>
</dbReference>
<dbReference type="RefSeq" id="XP_015629843.1">
    <property type="nucleotide sequence ID" value="XM_015774357.1"/>
</dbReference>
<dbReference type="RefSeq" id="XP_015629844.1">
    <property type="nucleotide sequence ID" value="XM_015774358.1"/>
</dbReference>
<dbReference type="SMR" id="P31924"/>
<dbReference type="FunCoup" id="P31924">
    <property type="interactions" value="168"/>
</dbReference>
<dbReference type="STRING" id="39947.P31924"/>
<dbReference type="CAZy" id="GT4">
    <property type="family name" value="Glycosyltransferase Family 4"/>
</dbReference>
<dbReference type="PaxDb" id="39947-P31924"/>
<dbReference type="EnsemblPlants" id="Os03t0401300-01">
    <property type="protein sequence ID" value="Os03t0401300-01"/>
    <property type="gene ID" value="Os03g0401300"/>
</dbReference>
<dbReference type="Gramene" id="Os03t0401300-01">
    <property type="protein sequence ID" value="Os03t0401300-01"/>
    <property type="gene ID" value="Os03g0401300"/>
</dbReference>
<dbReference type="KEGG" id="dosa:Os03g0401300"/>
<dbReference type="eggNOG" id="KOG0853">
    <property type="taxonomic scope" value="Eukaryota"/>
</dbReference>
<dbReference type="HOGENOM" id="CLU_019158_1_0_1"/>
<dbReference type="InParanoid" id="P31924"/>
<dbReference type="OMA" id="NNEHKFM"/>
<dbReference type="OrthoDB" id="937291at2759"/>
<dbReference type="BRENDA" id="2.4.1.13">
    <property type="organism ID" value="4460"/>
</dbReference>
<dbReference type="PlantReactome" id="R-OSA-1119452">
    <property type="pathway name" value="Galactose degradation II"/>
</dbReference>
<dbReference type="PlantReactome" id="R-OSA-1119465">
    <property type="pathway name" value="Sucrose biosynthesis"/>
</dbReference>
<dbReference type="SABIO-RK" id="P31924"/>
<dbReference type="Proteomes" id="UP000000763">
    <property type="component" value="Chromosome 3"/>
</dbReference>
<dbReference type="Proteomes" id="UP000007752">
    <property type="component" value="Chromosome 3"/>
</dbReference>
<dbReference type="Proteomes" id="UP000059680">
    <property type="component" value="Chromosome 3"/>
</dbReference>
<dbReference type="ExpressionAtlas" id="P31924">
    <property type="expression patterns" value="baseline and differential"/>
</dbReference>
<dbReference type="GO" id="GO:0016157">
    <property type="term" value="F:sucrose synthase activity"/>
    <property type="evidence" value="ECO:0000318"/>
    <property type="project" value="GO_Central"/>
</dbReference>
<dbReference type="GO" id="GO:0010037">
    <property type="term" value="P:response to carbon dioxide"/>
    <property type="evidence" value="ECO:0000270"/>
    <property type="project" value="UniProtKB"/>
</dbReference>
<dbReference type="GO" id="GO:0005985">
    <property type="term" value="P:sucrose metabolic process"/>
    <property type="evidence" value="ECO:0007669"/>
    <property type="project" value="InterPro"/>
</dbReference>
<dbReference type="FunFam" id="1.20.120.1230:FF:000001">
    <property type="entry name" value="Sucrose synthase"/>
    <property type="match status" value="1"/>
</dbReference>
<dbReference type="FunFam" id="3.10.450.330:FF:000001">
    <property type="entry name" value="Sucrose synthase"/>
    <property type="match status" value="1"/>
</dbReference>
<dbReference type="FunFam" id="3.40.50.2000:FF:000004">
    <property type="entry name" value="Sucrose synthase"/>
    <property type="match status" value="1"/>
</dbReference>
<dbReference type="Gene3D" id="1.20.120.1230">
    <property type="match status" value="1"/>
</dbReference>
<dbReference type="Gene3D" id="3.10.450.330">
    <property type="match status" value="1"/>
</dbReference>
<dbReference type="Gene3D" id="3.40.50.2000">
    <property type="entry name" value="Glycogen Phosphorylase B"/>
    <property type="match status" value="2"/>
</dbReference>
<dbReference type="InterPro" id="IPR001296">
    <property type="entry name" value="Glyco_trans_1"/>
</dbReference>
<dbReference type="InterPro" id="IPR000368">
    <property type="entry name" value="Sucrose_synth_GT-B1"/>
</dbReference>
<dbReference type="InterPro" id="IPR012820">
    <property type="entry name" value="Sucrose_synthase_pln/cyn"/>
</dbReference>
<dbReference type="InterPro" id="IPR056736">
    <property type="entry name" value="SUS_EPBD"/>
</dbReference>
<dbReference type="InterPro" id="IPR056735">
    <property type="entry name" value="SUS_N"/>
</dbReference>
<dbReference type="NCBIfam" id="TIGR02470">
    <property type="entry name" value="sucr_synth"/>
    <property type="match status" value="1"/>
</dbReference>
<dbReference type="PANTHER" id="PTHR45839">
    <property type="match status" value="1"/>
</dbReference>
<dbReference type="PANTHER" id="PTHR45839:SF29">
    <property type="entry name" value="SUCROSE SYNTHASE 1"/>
    <property type="match status" value="1"/>
</dbReference>
<dbReference type="Pfam" id="PF00534">
    <property type="entry name" value="Glycos_transf_1"/>
    <property type="match status" value="1"/>
</dbReference>
<dbReference type="Pfam" id="PF00862">
    <property type="entry name" value="GT-B_Sucrose_synth"/>
    <property type="match status" value="1"/>
</dbReference>
<dbReference type="Pfam" id="PF24862">
    <property type="entry name" value="SUS_EPBD"/>
    <property type="match status" value="1"/>
</dbReference>
<dbReference type="Pfam" id="PF24861">
    <property type="entry name" value="SUS_N"/>
    <property type="match status" value="1"/>
</dbReference>
<dbReference type="SUPFAM" id="SSF53756">
    <property type="entry name" value="UDP-Glycosyltransferase/glycogen phosphorylase"/>
    <property type="match status" value="1"/>
</dbReference>
<gene>
    <name type="primary">SUS1</name>
    <name type="synonym">RSS2</name>
    <name type="synonym">RSUS1</name>
    <name type="ordered locus">Os03g0401300</name>
    <name type="ordered locus">LOC_Os03g28330</name>
    <name type="ORF">OsJ_11182</name>
</gene>
<organism>
    <name type="scientific">Oryza sativa subsp. japonica</name>
    <name type="common">Rice</name>
    <dbReference type="NCBI Taxonomy" id="39947"/>
    <lineage>
        <taxon>Eukaryota</taxon>
        <taxon>Viridiplantae</taxon>
        <taxon>Streptophyta</taxon>
        <taxon>Embryophyta</taxon>
        <taxon>Tracheophyta</taxon>
        <taxon>Spermatophyta</taxon>
        <taxon>Magnoliopsida</taxon>
        <taxon>Liliopsida</taxon>
        <taxon>Poales</taxon>
        <taxon>Poaceae</taxon>
        <taxon>BOP clade</taxon>
        <taxon>Oryzoideae</taxon>
        <taxon>Oryzeae</taxon>
        <taxon>Oryzinae</taxon>
        <taxon>Oryza</taxon>
        <taxon>Oryza sativa</taxon>
    </lineage>
</organism>
<proteinExistence type="evidence at protein level"/>
<comment type="function">
    <text evidence="1">Sucrose-cleaving enzyme that provides UDP-glucose and fructose for various metabolic pathways.</text>
</comment>
<comment type="catalytic activity">
    <reaction>
        <text>an NDP-alpha-D-glucose + D-fructose = a ribonucleoside 5'-diphosphate + sucrose + H(+)</text>
        <dbReference type="Rhea" id="RHEA:16241"/>
        <dbReference type="ChEBI" id="CHEBI:15378"/>
        <dbReference type="ChEBI" id="CHEBI:17992"/>
        <dbReference type="ChEBI" id="CHEBI:37721"/>
        <dbReference type="ChEBI" id="CHEBI:57930"/>
        <dbReference type="ChEBI" id="CHEBI:76533"/>
        <dbReference type="EC" id="2.4.1.13"/>
    </reaction>
</comment>
<comment type="subunit">
    <text evidence="7">Homotetramer or heterotetramer with SUS2.</text>
</comment>
<comment type="tissue specificity">
    <text evidence="3 9">Expressed in root phloem and leaf mesophyll. Expressed in phloem tissues and aleurone layers of seeds and at lower levels in the pericarp and endosperm cells (at protein level). Predominantly expressed in elongating tissues including roots, developing leaves and internodes.</text>
</comment>
<comment type="developmental stage">
    <text evidence="3 4 6">Expressed early in seed development and then declines gradually and disappears (at protein level). In the caryopse, strongly expressed during the pre-storage phase, and the expression decreased thereafter.</text>
</comment>
<comment type="induction">
    <text evidence="5 8">Up-regulated by sucrose, fructose and glucose. Up-regulated under elevated CO2 condition.</text>
</comment>
<comment type="similarity">
    <text evidence="10">Belongs to the glycosyltransferase 1 family. Plant sucrose synthase subfamily.</text>
</comment>
<comment type="sequence caution" evidence="10">
    <conflict type="erroneous gene model prediction">
        <sequence resource="EMBL-CDS" id="ABF96469"/>
    </conflict>
</comment>